<organism>
    <name type="scientific">Pseudomonas aeruginosa (strain ATCC 15692 / DSM 22644 / CIP 104116 / JCM 14847 / LMG 12228 / 1C / PRS 101 / PAO1)</name>
    <dbReference type="NCBI Taxonomy" id="208964"/>
    <lineage>
        <taxon>Bacteria</taxon>
        <taxon>Pseudomonadati</taxon>
        <taxon>Pseudomonadota</taxon>
        <taxon>Gammaproteobacteria</taxon>
        <taxon>Pseudomonadales</taxon>
        <taxon>Pseudomonadaceae</taxon>
        <taxon>Pseudomonas</taxon>
    </lineage>
</organism>
<comment type="function">
    <text evidence="1">Converts the preformed base xanthine, a product of nucleic acid breakdown, to xanthosine 5'-monophosphate (XMP), so it can be reused for RNA or DNA synthesis.</text>
</comment>
<comment type="catalytic activity">
    <reaction evidence="1">
        <text>XMP + diphosphate = xanthine + 5-phospho-alpha-D-ribose 1-diphosphate</text>
        <dbReference type="Rhea" id="RHEA:10800"/>
        <dbReference type="ChEBI" id="CHEBI:17712"/>
        <dbReference type="ChEBI" id="CHEBI:33019"/>
        <dbReference type="ChEBI" id="CHEBI:57464"/>
        <dbReference type="ChEBI" id="CHEBI:58017"/>
        <dbReference type="EC" id="2.4.2.22"/>
    </reaction>
</comment>
<comment type="pathway">
    <text evidence="1">Purine metabolism; XMP biosynthesis via salvage pathway; XMP from xanthine: step 1/1.</text>
</comment>
<comment type="subunit">
    <text evidence="1">Homodimer.</text>
</comment>
<comment type="subcellular location">
    <subcellularLocation>
        <location evidence="1">Cytoplasm</location>
    </subcellularLocation>
</comment>
<comment type="similarity">
    <text evidence="1">Belongs to the purine/pyrimidine phosphoribosyltransferase family. Xpt subfamily.</text>
</comment>
<accession>Q9HTQ6</accession>
<reference key="1">
    <citation type="journal article" date="2000" name="Nature">
        <title>Complete genome sequence of Pseudomonas aeruginosa PAO1, an opportunistic pathogen.</title>
        <authorList>
            <person name="Stover C.K."/>
            <person name="Pham X.-Q.T."/>
            <person name="Erwin A.L."/>
            <person name="Mizoguchi S.D."/>
            <person name="Warrener P."/>
            <person name="Hickey M.J."/>
            <person name="Brinkman F.S.L."/>
            <person name="Hufnagle W.O."/>
            <person name="Kowalik D.J."/>
            <person name="Lagrou M."/>
            <person name="Garber R.L."/>
            <person name="Goltry L."/>
            <person name="Tolentino E."/>
            <person name="Westbrock-Wadman S."/>
            <person name="Yuan Y."/>
            <person name="Brody L.L."/>
            <person name="Coulter S.N."/>
            <person name="Folger K.R."/>
            <person name="Kas A."/>
            <person name="Larbig K."/>
            <person name="Lim R.M."/>
            <person name="Smith K.A."/>
            <person name="Spencer D.H."/>
            <person name="Wong G.K.-S."/>
            <person name="Wu Z."/>
            <person name="Paulsen I.T."/>
            <person name="Reizer J."/>
            <person name="Saier M.H. Jr."/>
            <person name="Hancock R.E.W."/>
            <person name="Lory S."/>
            <person name="Olson M.V."/>
        </authorList>
    </citation>
    <scope>NUCLEOTIDE SEQUENCE [LARGE SCALE GENOMIC DNA]</scope>
    <source>
        <strain>ATCC 15692 / DSM 22644 / CIP 104116 / JCM 14847 / LMG 12228 / 1C / PRS 101 / PAO1</strain>
    </source>
</reference>
<dbReference type="EC" id="2.4.2.22" evidence="1"/>
<dbReference type="EMBL" id="AE004091">
    <property type="protein sequence ID" value="AAG08683.1"/>
    <property type="molecule type" value="Genomic_DNA"/>
</dbReference>
<dbReference type="PIR" id="E82984">
    <property type="entry name" value="E82984"/>
</dbReference>
<dbReference type="RefSeq" id="NP_253985.1">
    <property type="nucleotide sequence ID" value="NC_002516.2"/>
</dbReference>
<dbReference type="RefSeq" id="WP_003110452.1">
    <property type="nucleotide sequence ID" value="NZ_QZGE01000020.1"/>
</dbReference>
<dbReference type="SMR" id="Q9HTQ6"/>
<dbReference type="STRING" id="208964.PA5298"/>
<dbReference type="PaxDb" id="208964-PA5298"/>
<dbReference type="GeneID" id="878159"/>
<dbReference type="KEGG" id="pae:PA5298"/>
<dbReference type="PATRIC" id="fig|208964.12.peg.5552"/>
<dbReference type="PseudoCAP" id="PA5298"/>
<dbReference type="HOGENOM" id="CLU_099015_0_0_6"/>
<dbReference type="InParanoid" id="Q9HTQ6"/>
<dbReference type="OrthoDB" id="9790678at2"/>
<dbReference type="PhylomeDB" id="Q9HTQ6"/>
<dbReference type="BioCyc" id="PAER208964:G1FZ6-5419-MONOMER"/>
<dbReference type="UniPathway" id="UPA00602">
    <property type="reaction ID" value="UER00658"/>
</dbReference>
<dbReference type="Proteomes" id="UP000002438">
    <property type="component" value="Chromosome"/>
</dbReference>
<dbReference type="GO" id="GO:0005737">
    <property type="term" value="C:cytoplasm"/>
    <property type="evidence" value="ECO:0007669"/>
    <property type="project" value="UniProtKB-SubCell"/>
</dbReference>
<dbReference type="GO" id="GO:0000310">
    <property type="term" value="F:xanthine phosphoribosyltransferase activity"/>
    <property type="evidence" value="ECO:0007669"/>
    <property type="project" value="UniProtKB-UniRule"/>
</dbReference>
<dbReference type="GO" id="GO:0006166">
    <property type="term" value="P:purine ribonucleoside salvage"/>
    <property type="evidence" value="ECO:0007669"/>
    <property type="project" value="UniProtKB-KW"/>
</dbReference>
<dbReference type="GO" id="GO:0046110">
    <property type="term" value="P:xanthine metabolic process"/>
    <property type="evidence" value="ECO:0007669"/>
    <property type="project" value="InterPro"/>
</dbReference>
<dbReference type="GO" id="GO:0032265">
    <property type="term" value="P:XMP salvage"/>
    <property type="evidence" value="ECO:0007669"/>
    <property type="project" value="UniProtKB-UniRule"/>
</dbReference>
<dbReference type="CDD" id="cd06223">
    <property type="entry name" value="PRTases_typeI"/>
    <property type="match status" value="1"/>
</dbReference>
<dbReference type="FunFam" id="3.40.50.2020:FF:000027">
    <property type="entry name" value="Xanthine phosphoribosyltransferase"/>
    <property type="match status" value="1"/>
</dbReference>
<dbReference type="Gene3D" id="3.40.50.2020">
    <property type="match status" value="1"/>
</dbReference>
<dbReference type="HAMAP" id="MF_01184">
    <property type="entry name" value="XPRTase"/>
    <property type="match status" value="1"/>
</dbReference>
<dbReference type="InterPro" id="IPR000836">
    <property type="entry name" value="PRibTrfase_dom"/>
</dbReference>
<dbReference type="InterPro" id="IPR029057">
    <property type="entry name" value="PRTase-like"/>
</dbReference>
<dbReference type="InterPro" id="IPR050118">
    <property type="entry name" value="Pur/Pyrimidine_PRTase"/>
</dbReference>
<dbReference type="InterPro" id="IPR010079">
    <property type="entry name" value="Xanthine_PRibTrfase"/>
</dbReference>
<dbReference type="NCBIfam" id="NF006671">
    <property type="entry name" value="PRK09219.1"/>
    <property type="match status" value="1"/>
</dbReference>
<dbReference type="NCBIfam" id="TIGR01744">
    <property type="entry name" value="XPRTase"/>
    <property type="match status" value="1"/>
</dbReference>
<dbReference type="PANTHER" id="PTHR43864">
    <property type="entry name" value="HYPOXANTHINE/GUANINE PHOSPHORIBOSYLTRANSFERASE"/>
    <property type="match status" value="1"/>
</dbReference>
<dbReference type="PANTHER" id="PTHR43864:SF1">
    <property type="entry name" value="XANTHINE PHOSPHORIBOSYLTRANSFERASE"/>
    <property type="match status" value="1"/>
</dbReference>
<dbReference type="Pfam" id="PF00156">
    <property type="entry name" value="Pribosyltran"/>
    <property type="match status" value="1"/>
</dbReference>
<dbReference type="SUPFAM" id="SSF53271">
    <property type="entry name" value="PRTase-like"/>
    <property type="match status" value="1"/>
</dbReference>
<protein>
    <recommendedName>
        <fullName evidence="1">Xanthine phosphoribosyltransferase</fullName>
        <shortName evidence="1">XPRTase</shortName>
        <ecNumber evidence="1">2.4.2.22</ecNumber>
    </recommendedName>
</protein>
<sequence length="190" mass="20607">MDILKDKIRSEGIVLSEHVLKVDAFLNHQIDPQLMQQVGHAFATRFRDQGITKIVTIEASGIAPAVMAGLELGVPVIFARKYQSLTLKDNLYISKVFSFTKQTESTIAISAKHLNAHDHVLVIDDFLANGHAAKALIDLIGQAGASIAGLGIVIEKSFQDGRALLESEGYRVESLARVKSLAGGQVEFLD</sequence>
<evidence type="ECO:0000255" key="1">
    <source>
        <dbReference type="HAMAP-Rule" id="MF_01184"/>
    </source>
</evidence>
<keyword id="KW-0963">Cytoplasm</keyword>
<keyword id="KW-0328">Glycosyltransferase</keyword>
<keyword id="KW-0660">Purine salvage</keyword>
<keyword id="KW-1185">Reference proteome</keyword>
<keyword id="KW-0808">Transferase</keyword>
<proteinExistence type="inferred from homology"/>
<feature type="chain" id="PRO_0000339727" description="Xanthine phosphoribosyltransferase">
    <location>
        <begin position="1"/>
        <end position="190"/>
    </location>
</feature>
<feature type="binding site" evidence="1">
    <location>
        <position position="20"/>
    </location>
    <ligand>
        <name>xanthine</name>
        <dbReference type="ChEBI" id="CHEBI:17712"/>
    </ligand>
</feature>
<feature type="binding site" evidence="1">
    <location>
        <position position="27"/>
    </location>
    <ligand>
        <name>xanthine</name>
        <dbReference type="ChEBI" id="CHEBI:17712"/>
    </ligand>
</feature>
<feature type="binding site" evidence="1">
    <location>
        <begin position="128"/>
        <end position="132"/>
    </location>
    <ligand>
        <name>5-phospho-alpha-D-ribose 1-diphosphate</name>
        <dbReference type="ChEBI" id="CHEBI:58017"/>
    </ligand>
</feature>
<feature type="binding site" evidence="1">
    <location>
        <position position="156"/>
    </location>
    <ligand>
        <name>xanthine</name>
        <dbReference type="ChEBI" id="CHEBI:17712"/>
    </ligand>
</feature>
<gene>
    <name evidence="1" type="primary">xpt</name>
    <name type="ordered locus">PA5298</name>
</gene>
<name>XPT_PSEAE</name>